<comment type="similarity">
    <text evidence="1">Belongs to the UPF0352 family.</text>
</comment>
<sequence length="75" mass="8360">MPQSSRYSDEHVEQLLSELVSVLEKHRTPTDLSLMVLGNMVTNLINTSIAPAQRKVLARSFAEALQASVREDKAH</sequence>
<proteinExistence type="inferred from homology"/>
<protein>
    <recommendedName>
        <fullName evidence="1">UPF0352 protein YpsIP31758_2722</fullName>
    </recommendedName>
</protein>
<dbReference type="EMBL" id="CP000720">
    <property type="protein sequence ID" value="ABS48929.1"/>
    <property type="molecule type" value="Genomic_DNA"/>
</dbReference>
<dbReference type="RefSeq" id="WP_002208836.1">
    <property type="nucleotide sequence ID" value="NC_009708.1"/>
</dbReference>
<dbReference type="SMR" id="A7FKA9"/>
<dbReference type="KEGG" id="ypi:YpsIP31758_2722"/>
<dbReference type="HOGENOM" id="CLU_175457_0_0_6"/>
<dbReference type="Proteomes" id="UP000002412">
    <property type="component" value="Chromosome"/>
</dbReference>
<dbReference type="Gene3D" id="1.10.3390.10">
    <property type="entry name" value="YejL-like"/>
    <property type="match status" value="1"/>
</dbReference>
<dbReference type="HAMAP" id="MF_00816">
    <property type="entry name" value="UPF0352"/>
    <property type="match status" value="1"/>
</dbReference>
<dbReference type="InterPro" id="IPR009857">
    <property type="entry name" value="UPF0352"/>
</dbReference>
<dbReference type="InterPro" id="IPR023202">
    <property type="entry name" value="YejL_sf"/>
</dbReference>
<dbReference type="NCBIfam" id="NF010242">
    <property type="entry name" value="PRK13689.1"/>
    <property type="match status" value="1"/>
</dbReference>
<dbReference type="Pfam" id="PF07208">
    <property type="entry name" value="DUF1414"/>
    <property type="match status" value="1"/>
</dbReference>
<dbReference type="PIRSF" id="PIRSF006188">
    <property type="entry name" value="UCP006188"/>
    <property type="match status" value="1"/>
</dbReference>
<dbReference type="SUPFAM" id="SSF158651">
    <property type="entry name" value="YejL-like"/>
    <property type="match status" value="1"/>
</dbReference>
<gene>
    <name type="ordered locus">YpsIP31758_2722</name>
</gene>
<reference key="1">
    <citation type="journal article" date="2007" name="PLoS Genet.">
        <title>The complete genome sequence of Yersinia pseudotuberculosis IP31758, the causative agent of Far East scarlet-like fever.</title>
        <authorList>
            <person name="Eppinger M."/>
            <person name="Rosovitz M.J."/>
            <person name="Fricke W.F."/>
            <person name="Rasko D.A."/>
            <person name="Kokorina G."/>
            <person name="Fayolle C."/>
            <person name="Lindler L.E."/>
            <person name="Carniel E."/>
            <person name="Ravel J."/>
        </authorList>
    </citation>
    <scope>NUCLEOTIDE SEQUENCE [LARGE SCALE GENOMIC DNA]</scope>
    <source>
        <strain>IP 31758</strain>
    </source>
</reference>
<evidence type="ECO:0000255" key="1">
    <source>
        <dbReference type="HAMAP-Rule" id="MF_00816"/>
    </source>
</evidence>
<accession>A7FKA9</accession>
<name>Y2722_YERP3</name>
<organism>
    <name type="scientific">Yersinia pseudotuberculosis serotype O:1b (strain IP 31758)</name>
    <dbReference type="NCBI Taxonomy" id="349747"/>
    <lineage>
        <taxon>Bacteria</taxon>
        <taxon>Pseudomonadati</taxon>
        <taxon>Pseudomonadota</taxon>
        <taxon>Gammaproteobacteria</taxon>
        <taxon>Enterobacterales</taxon>
        <taxon>Yersiniaceae</taxon>
        <taxon>Yersinia</taxon>
    </lineage>
</organism>
<feature type="chain" id="PRO_1000062320" description="UPF0352 protein YpsIP31758_2722">
    <location>
        <begin position="1"/>
        <end position="75"/>
    </location>
</feature>